<name>Y2464_BURA4</name>
<accession>B1YVD8</accession>
<sequence>MDARLLEILVCPICKGPLHYDRAAQELICNADKLAYPIRDGIPVMLVDEARQTVEGTPVDPAGPAGS</sequence>
<gene>
    <name type="ordered locus">BamMC406_2464</name>
</gene>
<protein>
    <recommendedName>
        <fullName evidence="1">UPF0434 protein BamMC406_2464</fullName>
    </recommendedName>
</protein>
<reference key="1">
    <citation type="submission" date="2008-04" db="EMBL/GenBank/DDBJ databases">
        <title>Complete sequence of chromosome 1 of Burkholderia ambifaria MC40-6.</title>
        <authorList>
            <person name="Copeland A."/>
            <person name="Lucas S."/>
            <person name="Lapidus A."/>
            <person name="Glavina del Rio T."/>
            <person name="Dalin E."/>
            <person name="Tice H."/>
            <person name="Pitluck S."/>
            <person name="Chain P."/>
            <person name="Malfatti S."/>
            <person name="Shin M."/>
            <person name="Vergez L."/>
            <person name="Lang D."/>
            <person name="Schmutz J."/>
            <person name="Larimer F."/>
            <person name="Land M."/>
            <person name="Hauser L."/>
            <person name="Kyrpides N."/>
            <person name="Lykidis A."/>
            <person name="Ramette A."/>
            <person name="Konstantinidis K."/>
            <person name="Tiedje J."/>
            <person name="Richardson P."/>
        </authorList>
    </citation>
    <scope>NUCLEOTIDE SEQUENCE [LARGE SCALE GENOMIC DNA]</scope>
    <source>
        <strain>MC40-6</strain>
    </source>
</reference>
<feature type="chain" id="PRO_1000138291" description="UPF0434 protein BamMC406_2464">
    <location>
        <begin position="1"/>
        <end position="67"/>
    </location>
</feature>
<proteinExistence type="inferred from homology"/>
<comment type="similarity">
    <text evidence="1">Belongs to the UPF0434 family.</text>
</comment>
<dbReference type="EMBL" id="CP001025">
    <property type="protein sequence ID" value="ACB64942.1"/>
    <property type="molecule type" value="Genomic_DNA"/>
</dbReference>
<dbReference type="RefSeq" id="WP_006750935.1">
    <property type="nucleotide sequence ID" value="NC_010551.1"/>
</dbReference>
<dbReference type="SMR" id="B1YVD8"/>
<dbReference type="KEGG" id="bac:BamMC406_2464"/>
<dbReference type="HOGENOM" id="CLU_155659_3_0_4"/>
<dbReference type="OrthoDB" id="9812205at2"/>
<dbReference type="Proteomes" id="UP000001680">
    <property type="component" value="Chromosome 1"/>
</dbReference>
<dbReference type="GO" id="GO:0005829">
    <property type="term" value="C:cytosol"/>
    <property type="evidence" value="ECO:0007669"/>
    <property type="project" value="TreeGrafter"/>
</dbReference>
<dbReference type="FunFam" id="2.20.25.10:FF:000002">
    <property type="entry name" value="UPF0434 protein YcaR"/>
    <property type="match status" value="1"/>
</dbReference>
<dbReference type="Gene3D" id="2.20.25.10">
    <property type="match status" value="1"/>
</dbReference>
<dbReference type="HAMAP" id="MF_01187">
    <property type="entry name" value="UPF0434"/>
    <property type="match status" value="1"/>
</dbReference>
<dbReference type="InterPro" id="IPR005651">
    <property type="entry name" value="Trm112-like"/>
</dbReference>
<dbReference type="PANTHER" id="PTHR33505:SF4">
    <property type="entry name" value="PROTEIN PREY, MITOCHONDRIAL"/>
    <property type="match status" value="1"/>
</dbReference>
<dbReference type="PANTHER" id="PTHR33505">
    <property type="entry name" value="ZGC:162634"/>
    <property type="match status" value="1"/>
</dbReference>
<dbReference type="Pfam" id="PF03966">
    <property type="entry name" value="Trm112p"/>
    <property type="match status" value="1"/>
</dbReference>
<dbReference type="SUPFAM" id="SSF158997">
    <property type="entry name" value="Trm112p-like"/>
    <property type="match status" value="1"/>
</dbReference>
<evidence type="ECO:0000255" key="1">
    <source>
        <dbReference type="HAMAP-Rule" id="MF_01187"/>
    </source>
</evidence>
<organism>
    <name type="scientific">Burkholderia ambifaria (strain MC40-6)</name>
    <dbReference type="NCBI Taxonomy" id="398577"/>
    <lineage>
        <taxon>Bacteria</taxon>
        <taxon>Pseudomonadati</taxon>
        <taxon>Pseudomonadota</taxon>
        <taxon>Betaproteobacteria</taxon>
        <taxon>Burkholderiales</taxon>
        <taxon>Burkholderiaceae</taxon>
        <taxon>Burkholderia</taxon>
        <taxon>Burkholderia cepacia complex</taxon>
    </lineage>
</organism>